<evidence type="ECO:0000255" key="1">
    <source>
        <dbReference type="HAMAP-Rule" id="MF_00530"/>
    </source>
</evidence>
<organism>
    <name type="scientific">Idiomarina loihiensis (strain ATCC BAA-735 / DSM 15497 / L2-TR)</name>
    <dbReference type="NCBI Taxonomy" id="283942"/>
    <lineage>
        <taxon>Bacteria</taxon>
        <taxon>Pseudomonadati</taxon>
        <taxon>Pseudomonadota</taxon>
        <taxon>Gammaproteobacteria</taxon>
        <taxon>Alteromonadales</taxon>
        <taxon>Idiomarinaceae</taxon>
        <taxon>Idiomarina</taxon>
    </lineage>
</organism>
<protein>
    <recommendedName>
        <fullName evidence="1">ATP synthase epsilon chain</fullName>
    </recommendedName>
    <alternativeName>
        <fullName evidence="1">ATP synthase F1 sector epsilon subunit</fullName>
    </alternativeName>
    <alternativeName>
        <fullName evidence="1">F-ATPase epsilon subunit</fullName>
    </alternativeName>
</protein>
<comment type="function">
    <text evidence="1">Produces ATP from ADP in the presence of a proton gradient across the membrane.</text>
</comment>
<comment type="subunit">
    <text>F-type ATPases have 2 components, CF(1) - the catalytic core - and CF(0) - the membrane proton channel. CF(1) has five subunits: alpha(3), beta(3), gamma(1), delta(1), epsilon(1). CF(0) has three main subunits: a, b and c.</text>
</comment>
<comment type="subcellular location">
    <subcellularLocation>
        <location evidence="1">Cell inner membrane</location>
        <topology evidence="1">Peripheral membrane protein</topology>
    </subcellularLocation>
</comment>
<comment type="similarity">
    <text evidence="1">Belongs to the ATPase epsilon chain family.</text>
</comment>
<accession>Q5QZH3</accession>
<keyword id="KW-0066">ATP synthesis</keyword>
<keyword id="KW-0997">Cell inner membrane</keyword>
<keyword id="KW-1003">Cell membrane</keyword>
<keyword id="KW-0139">CF(1)</keyword>
<keyword id="KW-0375">Hydrogen ion transport</keyword>
<keyword id="KW-0406">Ion transport</keyword>
<keyword id="KW-0472">Membrane</keyword>
<keyword id="KW-1185">Reference proteome</keyword>
<keyword id="KW-0813">Transport</keyword>
<name>ATPE_IDILO</name>
<sequence length="138" mass="14673">MATQTLNLDVVSAEDKLFSGVVQTVQVTGSEGELGIYPGHAPLLTKIKPGMVRYVSEAGDEELLYVAGGVLEVQPGHVIVLADVAVRGDELDLQEAEAAKKRAEEAIADSGSDVTYAEAIAELSRALAQIDIIRKLKR</sequence>
<gene>
    <name evidence="1" type="primary">atpC</name>
    <name type="ordered locus">IL2618</name>
</gene>
<feature type="chain" id="PRO_0000265825" description="ATP synthase epsilon chain">
    <location>
        <begin position="1"/>
        <end position="138"/>
    </location>
</feature>
<dbReference type="EMBL" id="AE017340">
    <property type="protein sequence ID" value="AAV83450.1"/>
    <property type="molecule type" value="Genomic_DNA"/>
</dbReference>
<dbReference type="RefSeq" id="WP_011235841.1">
    <property type="nucleotide sequence ID" value="NC_006512.1"/>
</dbReference>
<dbReference type="SMR" id="Q5QZH3"/>
<dbReference type="STRING" id="283942.IL2618"/>
<dbReference type="GeneID" id="41337817"/>
<dbReference type="KEGG" id="ilo:IL2618"/>
<dbReference type="eggNOG" id="COG0355">
    <property type="taxonomic scope" value="Bacteria"/>
</dbReference>
<dbReference type="HOGENOM" id="CLU_084338_2_0_6"/>
<dbReference type="OrthoDB" id="9791445at2"/>
<dbReference type="Proteomes" id="UP000001171">
    <property type="component" value="Chromosome"/>
</dbReference>
<dbReference type="GO" id="GO:0005886">
    <property type="term" value="C:plasma membrane"/>
    <property type="evidence" value="ECO:0007669"/>
    <property type="project" value="UniProtKB-SubCell"/>
</dbReference>
<dbReference type="GO" id="GO:0045259">
    <property type="term" value="C:proton-transporting ATP synthase complex"/>
    <property type="evidence" value="ECO:0007669"/>
    <property type="project" value="UniProtKB-KW"/>
</dbReference>
<dbReference type="GO" id="GO:0005524">
    <property type="term" value="F:ATP binding"/>
    <property type="evidence" value="ECO:0007669"/>
    <property type="project" value="UniProtKB-UniRule"/>
</dbReference>
<dbReference type="GO" id="GO:0046933">
    <property type="term" value="F:proton-transporting ATP synthase activity, rotational mechanism"/>
    <property type="evidence" value="ECO:0007669"/>
    <property type="project" value="UniProtKB-UniRule"/>
</dbReference>
<dbReference type="CDD" id="cd12152">
    <property type="entry name" value="F1-ATPase_delta"/>
    <property type="match status" value="1"/>
</dbReference>
<dbReference type="FunFam" id="2.60.15.10:FF:000001">
    <property type="entry name" value="ATP synthase epsilon chain"/>
    <property type="match status" value="1"/>
</dbReference>
<dbReference type="Gene3D" id="1.20.5.440">
    <property type="entry name" value="ATP synthase delta/epsilon subunit, C-terminal domain"/>
    <property type="match status" value="1"/>
</dbReference>
<dbReference type="Gene3D" id="2.60.15.10">
    <property type="entry name" value="F0F1 ATP synthase delta/epsilon subunit, N-terminal"/>
    <property type="match status" value="1"/>
</dbReference>
<dbReference type="HAMAP" id="MF_00530">
    <property type="entry name" value="ATP_synth_epsil_bac"/>
    <property type="match status" value="1"/>
</dbReference>
<dbReference type="InterPro" id="IPR036794">
    <property type="entry name" value="ATP_F1_dsu/esu_C_sf"/>
</dbReference>
<dbReference type="InterPro" id="IPR001469">
    <property type="entry name" value="ATP_synth_F1_dsu/esu"/>
</dbReference>
<dbReference type="InterPro" id="IPR020546">
    <property type="entry name" value="ATP_synth_F1_dsu/esu_N"/>
</dbReference>
<dbReference type="InterPro" id="IPR020547">
    <property type="entry name" value="ATP_synth_F1_esu_C"/>
</dbReference>
<dbReference type="InterPro" id="IPR036771">
    <property type="entry name" value="ATPsynth_dsu/esu_N"/>
</dbReference>
<dbReference type="NCBIfam" id="TIGR01216">
    <property type="entry name" value="ATP_synt_epsi"/>
    <property type="match status" value="1"/>
</dbReference>
<dbReference type="NCBIfam" id="NF001847">
    <property type="entry name" value="PRK00571.1-4"/>
    <property type="match status" value="1"/>
</dbReference>
<dbReference type="PANTHER" id="PTHR13822">
    <property type="entry name" value="ATP SYNTHASE DELTA/EPSILON CHAIN"/>
    <property type="match status" value="1"/>
</dbReference>
<dbReference type="PANTHER" id="PTHR13822:SF10">
    <property type="entry name" value="ATP SYNTHASE EPSILON CHAIN, CHLOROPLASTIC"/>
    <property type="match status" value="1"/>
</dbReference>
<dbReference type="Pfam" id="PF00401">
    <property type="entry name" value="ATP-synt_DE"/>
    <property type="match status" value="1"/>
</dbReference>
<dbReference type="Pfam" id="PF02823">
    <property type="entry name" value="ATP-synt_DE_N"/>
    <property type="match status" value="1"/>
</dbReference>
<dbReference type="SUPFAM" id="SSF46604">
    <property type="entry name" value="Epsilon subunit of F1F0-ATP synthase C-terminal domain"/>
    <property type="match status" value="1"/>
</dbReference>
<dbReference type="SUPFAM" id="SSF51344">
    <property type="entry name" value="Epsilon subunit of F1F0-ATP synthase N-terminal domain"/>
    <property type="match status" value="1"/>
</dbReference>
<reference key="1">
    <citation type="journal article" date="2004" name="Proc. Natl. Acad. Sci. U.S.A.">
        <title>Genome sequence of the deep-sea gamma-proteobacterium Idiomarina loihiensis reveals amino acid fermentation as a source of carbon and energy.</title>
        <authorList>
            <person name="Hou S."/>
            <person name="Saw J.H."/>
            <person name="Lee K.S."/>
            <person name="Freitas T.A."/>
            <person name="Belisle C."/>
            <person name="Kawarabayasi Y."/>
            <person name="Donachie S.P."/>
            <person name="Pikina A."/>
            <person name="Galperin M.Y."/>
            <person name="Koonin E.V."/>
            <person name="Makarova K.S."/>
            <person name="Omelchenko M.V."/>
            <person name="Sorokin A."/>
            <person name="Wolf Y.I."/>
            <person name="Li Q.X."/>
            <person name="Keum Y.S."/>
            <person name="Campbell S."/>
            <person name="Denery J."/>
            <person name="Aizawa S."/>
            <person name="Shibata S."/>
            <person name="Malahoff A."/>
            <person name="Alam M."/>
        </authorList>
    </citation>
    <scope>NUCLEOTIDE SEQUENCE [LARGE SCALE GENOMIC DNA]</scope>
    <source>
        <strain>ATCC BAA-735 / DSM 15497 / L2-TR</strain>
    </source>
</reference>
<proteinExistence type="inferred from homology"/>